<protein>
    <recommendedName>
        <fullName evidence="1">Aspartate--tRNA ligase</fullName>
        <ecNumber evidence="1">6.1.1.12</ecNumber>
    </recommendedName>
    <alternativeName>
        <fullName evidence="1">Aspartyl-tRNA synthetase</fullName>
        <shortName evidence="1">AspRS</shortName>
    </alternativeName>
</protein>
<organism>
    <name type="scientific">Clostridium tetani (strain Massachusetts / E88)</name>
    <dbReference type="NCBI Taxonomy" id="212717"/>
    <lineage>
        <taxon>Bacteria</taxon>
        <taxon>Bacillati</taxon>
        <taxon>Bacillota</taxon>
        <taxon>Clostridia</taxon>
        <taxon>Eubacteriales</taxon>
        <taxon>Clostridiaceae</taxon>
        <taxon>Clostridium</taxon>
    </lineage>
</organism>
<keyword id="KW-0030">Aminoacyl-tRNA synthetase</keyword>
<keyword id="KW-0067">ATP-binding</keyword>
<keyword id="KW-0963">Cytoplasm</keyword>
<keyword id="KW-0436">Ligase</keyword>
<keyword id="KW-0547">Nucleotide-binding</keyword>
<keyword id="KW-0648">Protein biosynthesis</keyword>
<keyword id="KW-1185">Reference proteome</keyword>
<feature type="chain" id="PRO_0000110860" description="Aspartate--tRNA ligase">
    <location>
        <begin position="1"/>
        <end position="592"/>
    </location>
</feature>
<feature type="region of interest" description="Aspartate" evidence="1">
    <location>
        <begin position="204"/>
        <end position="207"/>
    </location>
</feature>
<feature type="binding site" evidence="1">
    <location>
        <position position="180"/>
    </location>
    <ligand>
        <name>L-aspartate</name>
        <dbReference type="ChEBI" id="CHEBI:29991"/>
    </ligand>
</feature>
<feature type="binding site" evidence="1">
    <location>
        <begin position="226"/>
        <end position="228"/>
    </location>
    <ligand>
        <name>ATP</name>
        <dbReference type="ChEBI" id="CHEBI:30616"/>
    </ligand>
</feature>
<feature type="binding site" evidence="1">
    <location>
        <position position="226"/>
    </location>
    <ligand>
        <name>L-aspartate</name>
        <dbReference type="ChEBI" id="CHEBI:29991"/>
    </ligand>
</feature>
<feature type="binding site" evidence="1">
    <location>
        <position position="235"/>
    </location>
    <ligand>
        <name>ATP</name>
        <dbReference type="ChEBI" id="CHEBI:30616"/>
    </ligand>
</feature>
<feature type="binding site" evidence="1">
    <location>
        <position position="455"/>
    </location>
    <ligand>
        <name>L-aspartate</name>
        <dbReference type="ChEBI" id="CHEBI:29991"/>
    </ligand>
</feature>
<feature type="binding site" evidence="1">
    <location>
        <position position="489"/>
    </location>
    <ligand>
        <name>ATP</name>
        <dbReference type="ChEBI" id="CHEBI:30616"/>
    </ligand>
</feature>
<feature type="binding site" evidence="1">
    <location>
        <position position="496"/>
    </location>
    <ligand>
        <name>L-aspartate</name>
        <dbReference type="ChEBI" id="CHEBI:29991"/>
    </ligand>
</feature>
<feature type="binding site" evidence="1">
    <location>
        <begin position="541"/>
        <end position="544"/>
    </location>
    <ligand>
        <name>ATP</name>
        <dbReference type="ChEBI" id="CHEBI:30616"/>
    </ligand>
</feature>
<reference key="1">
    <citation type="journal article" date="2003" name="Proc. Natl. Acad. Sci. U.S.A.">
        <title>The genome sequence of Clostridium tetani, the causative agent of tetanus disease.</title>
        <authorList>
            <person name="Brueggemann H."/>
            <person name="Baeumer S."/>
            <person name="Fricke W.F."/>
            <person name="Wiezer A."/>
            <person name="Liesegang H."/>
            <person name="Decker I."/>
            <person name="Herzberg C."/>
            <person name="Martinez-Arias R."/>
            <person name="Merkl R."/>
            <person name="Henne A."/>
            <person name="Gottschalk G."/>
        </authorList>
    </citation>
    <scope>NUCLEOTIDE SEQUENCE [LARGE SCALE GENOMIC DNA]</scope>
    <source>
        <strain>Massachusetts / E88</strain>
    </source>
</reference>
<comment type="function">
    <text evidence="1">Catalyzes the attachment of L-aspartate to tRNA(Asp) in a two-step reaction: L-aspartate is first activated by ATP to form Asp-AMP and then transferred to the acceptor end of tRNA(Asp).</text>
</comment>
<comment type="catalytic activity">
    <reaction evidence="1">
        <text>tRNA(Asp) + L-aspartate + ATP = L-aspartyl-tRNA(Asp) + AMP + diphosphate</text>
        <dbReference type="Rhea" id="RHEA:19649"/>
        <dbReference type="Rhea" id="RHEA-COMP:9660"/>
        <dbReference type="Rhea" id="RHEA-COMP:9678"/>
        <dbReference type="ChEBI" id="CHEBI:29991"/>
        <dbReference type="ChEBI" id="CHEBI:30616"/>
        <dbReference type="ChEBI" id="CHEBI:33019"/>
        <dbReference type="ChEBI" id="CHEBI:78442"/>
        <dbReference type="ChEBI" id="CHEBI:78516"/>
        <dbReference type="ChEBI" id="CHEBI:456215"/>
        <dbReference type="EC" id="6.1.1.12"/>
    </reaction>
</comment>
<comment type="subunit">
    <text evidence="1">Homodimer.</text>
</comment>
<comment type="subcellular location">
    <subcellularLocation>
        <location evidence="1">Cytoplasm</location>
    </subcellularLocation>
</comment>
<comment type="similarity">
    <text evidence="1">Belongs to the class-II aminoacyl-tRNA synthetase family. Type 1 subfamily.</text>
</comment>
<dbReference type="EC" id="6.1.1.12" evidence="1"/>
<dbReference type="EMBL" id="AE015927">
    <property type="protein sequence ID" value="AAO36683.1"/>
    <property type="molecule type" value="Genomic_DNA"/>
</dbReference>
<dbReference type="RefSeq" id="WP_011100341.1">
    <property type="nucleotide sequence ID" value="NC_004557.1"/>
</dbReference>
<dbReference type="SMR" id="Q892B2"/>
<dbReference type="STRING" id="212717.CTC_02194"/>
<dbReference type="GeneID" id="24252729"/>
<dbReference type="KEGG" id="ctc:CTC_02194"/>
<dbReference type="HOGENOM" id="CLU_014330_3_2_9"/>
<dbReference type="OrthoDB" id="9802326at2"/>
<dbReference type="Proteomes" id="UP000001412">
    <property type="component" value="Chromosome"/>
</dbReference>
<dbReference type="GO" id="GO:0005737">
    <property type="term" value="C:cytoplasm"/>
    <property type="evidence" value="ECO:0007669"/>
    <property type="project" value="UniProtKB-SubCell"/>
</dbReference>
<dbReference type="GO" id="GO:0004815">
    <property type="term" value="F:aspartate-tRNA ligase activity"/>
    <property type="evidence" value="ECO:0007669"/>
    <property type="project" value="UniProtKB-UniRule"/>
</dbReference>
<dbReference type="GO" id="GO:0005524">
    <property type="term" value="F:ATP binding"/>
    <property type="evidence" value="ECO:0007669"/>
    <property type="project" value="UniProtKB-UniRule"/>
</dbReference>
<dbReference type="GO" id="GO:0140096">
    <property type="term" value="F:catalytic activity, acting on a protein"/>
    <property type="evidence" value="ECO:0007669"/>
    <property type="project" value="UniProtKB-ARBA"/>
</dbReference>
<dbReference type="GO" id="GO:0003676">
    <property type="term" value="F:nucleic acid binding"/>
    <property type="evidence" value="ECO:0007669"/>
    <property type="project" value="InterPro"/>
</dbReference>
<dbReference type="GO" id="GO:0016740">
    <property type="term" value="F:transferase activity"/>
    <property type="evidence" value="ECO:0007669"/>
    <property type="project" value="UniProtKB-ARBA"/>
</dbReference>
<dbReference type="GO" id="GO:0006422">
    <property type="term" value="P:aspartyl-tRNA aminoacylation"/>
    <property type="evidence" value="ECO:0007669"/>
    <property type="project" value="UniProtKB-UniRule"/>
</dbReference>
<dbReference type="CDD" id="cd00777">
    <property type="entry name" value="AspRS_core"/>
    <property type="match status" value="1"/>
</dbReference>
<dbReference type="CDD" id="cd04317">
    <property type="entry name" value="EcAspRS_like_N"/>
    <property type="match status" value="1"/>
</dbReference>
<dbReference type="Gene3D" id="3.30.930.10">
    <property type="entry name" value="Bira Bifunctional Protein, Domain 2"/>
    <property type="match status" value="1"/>
</dbReference>
<dbReference type="Gene3D" id="3.30.1360.30">
    <property type="entry name" value="GAD-like domain"/>
    <property type="match status" value="1"/>
</dbReference>
<dbReference type="Gene3D" id="2.40.50.140">
    <property type="entry name" value="Nucleic acid-binding proteins"/>
    <property type="match status" value="1"/>
</dbReference>
<dbReference type="HAMAP" id="MF_00044">
    <property type="entry name" value="Asp_tRNA_synth_type1"/>
    <property type="match status" value="1"/>
</dbReference>
<dbReference type="InterPro" id="IPR004364">
    <property type="entry name" value="Aa-tRNA-synt_II"/>
</dbReference>
<dbReference type="InterPro" id="IPR006195">
    <property type="entry name" value="aa-tRNA-synth_II"/>
</dbReference>
<dbReference type="InterPro" id="IPR045864">
    <property type="entry name" value="aa-tRNA-synth_II/BPL/LPL"/>
</dbReference>
<dbReference type="InterPro" id="IPR004524">
    <property type="entry name" value="Asp-tRNA-ligase_1"/>
</dbReference>
<dbReference type="InterPro" id="IPR047089">
    <property type="entry name" value="Asp-tRNA-ligase_1_N"/>
</dbReference>
<dbReference type="InterPro" id="IPR002312">
    <property type="entry name" value="Asp/Asn-tRNA-synth_IIb"/>
</dbReference>
<dbReference type="InterPro" id="IPR047090">
    <property type="entry name" value="AspRS_core"/>
</dbReference>
<dbReference type="InterPro" id="IPR004115">
    <property type="entry name" value="GAD-like_sf"/>
</dbReference>
<dbReference type="InterPro" id="IPR029351">
    <property type="entry name" value="GAD_dom"/>
</dbReference>
<dbReference type="InterPro" id="IPR012340">
    <property type="entry name" value="NA-bd_OB-fold"/>
</dbReference>
<dbReference type="InterPro" id="IPR004365">
    <property type="entry name" value="NA-bd_OB_tRNA"/>
</dbReference>
<dbReference type="NCBIfam" id="TIGR00459">
    <property type="entry name" value="aspS_bact"/>
    <property type="match status" value="1"/>
</dbReference>
<dbReference type="NCBIfam" id="NF001750">
    <property type="entry name" value="PRK00476.1"/>
    <property type="match status" value="1"/>
</dbReference>
<dbReference type="PANTHER" id="PTHR22594:SF5">
    <property type="entry name" value="ASPARTATE--TRNA LIGASE, MITOCHONDRIAL"/>
    <property type="match status" value="1"/>
</dbReference>
<dbReference type="PANTHER" id="PTHR22594">
    <property type="entry name" value="ASPARTYL/LYSYL-TRNA SYNTHETASE"/>
    <property type="match status" value="1"/>
</dbReference>
<dbReference type="Pfam" id="PF02938">
    <property type="entry name" value="GAD"/>
    <property type="match status" value="1"/>
</dbReference>
<dbReference type="Pfam" id="PF00152">
    <property type="entry name" value="tRNA-synt_2"/>
    <property type="match status" value="1"/>
</dbReference>
<dbReference type="Pfam" id="PF01336">
    <property type="entry name" value="tRNA_anti-codon"/>
    <property type="match status" value="1"/>
</dbReference>
<dbReference type="PRINTS" id="PR01042">
    <property type="entry name" value="TRNASYNTHASP"/>
</dbReference>
<dbReference type="SUPFAM" id="SSF55681">
    <property type="entry name" value="Class II aaRS and biotin synthetases"/>
    <property type="match status" value="1"/>
</dbReference>
<dbReference type="SUPFAM" id="SSF55261">
    <property type="entry name" value="GAD domain-like"/>
    <property type="match status" value="1"/>
</dbReference>
<dbReference type="SUPFAM" id="SSF50249">
    <property type="entry name" value="Nucleic acid-binding proteins"/>
    <property type="match status" value="1"/>
</dbReference>
<dbReference type="PROSITE" id="PS50862">
    <property type="entry name" value="AA_TRNA_LIGASE_II"/>
    <property type="match status" value="1"/>
</dbReference>
<evidence type="ECO:0000255" key="1">
    <source>
        <dbReference type="HAMAP-Rule" id="MF_00044"/>
    </source>
</evidence>
<accession>Q892B2</accession>
<sequence>MGEALKGLKRTIMCGQLREENINEQHTVMGWVQRKRNLGGLIFIDLRDRDGILQVVFGEEINKEAFEKADTVRSEYCLAVTGKIIKRQAVNENLPTGIVELQGESIKILSESETPPIYIKEDLDAAENIRLKYRYLDLRRPDMQKILKIRHKTAKAVRDFLDKEEFLEVETPMLTKSTPEGARDYLVPSRNYPGMFYALPQSPQLFKQLLMVSGFDKYFQIVKCFRDEDLRANRQPEFTQIDLEMSFVEMDDVIDLNERLIQYVFKNVVGKDIKLPIERMPYKIAMSKYGSDKPDLRFGMEIENLDDVLKETSFKVFKEVIDNGGTVSAIKAENCAGMGRKQIDKLGDFVKTFKAKGLAWIAYKEDEIKSPIAKFLTEEELKSIIDKMDAKVGDLILIVSDAKEKVVQQSLGQLRLHLAKELGLLKDNDELRFVWVTEFPLVSYNEEEDRWEAEHHPFTAPMDEDIQYLDTDPGKVRAKAYDIVLNGEELGGGSIRIHDTKLQEKMFEVLGFTEEKAWERFGFLLEAFKFGPPPHGGLAFGFDRMIMFLSGTENIKDVIAFPKNQNAFCPMTEAPNVVDEVQLDELGIKIKK</sequence>
<name>SYD_CLOTE</name>
<gene>
    <name evidence="1" type="primary">aspS</name>
    <name type="ordered locus">CTC_02194</name>
</gene>
<proteinExistence type="inferred from homology"/>